<gene>
    <name evidence="1" type="primary">clpX</name>
    <name type="ordered locus">CYB_1336</name>
</gene>
<proteinExistence type="inferred from homology"/>
<reference key="1">
    <citation type="journal article" date="2007" name="ISME J.">
        <title>Population level functional diversity in a microbial community revealed by comparative genomic and metagenomic analyses.</title>
        <authorList>
            <person name="Bhaya D."/>
            <person name="Grossman A.R."/>
            <person name="Steunou A.-S."/>
            <person name="Khuri N."/>
            <person name="Cohan F.M."/>
            <person name="Hamamura N."/>
            <person name="Melendrez M.C."/>
            <person name="Bateson M.M."/>
            <person name="Ward D.M."/>
            <person name="Heidelberg J.F."/>
        </authorList>
    </citation>
    <scope>NUCLEOTIDE SEQUENCE [LARGE SCALE GENOMIC DNA]</scope>
    <source>
        <strain>JA-2-3B'a(2-13)</strain>
    </source>
</reference>
<evidence type="ECO:0000255" key="1">
    <source>
        <dbReference type="HAMAP-Rule" id="MF_00175"/>
    </source>
</evidence>
<evidence type="ECO:0000255" key="2">
    <source>
        <dbReference type="PROSITE-ProRule" id="PRU01250"/>
    </source>
</evidence>
<evidence type="ECO:0000256" key="3">
    <source>
        <dbReference type="SAM" id="MobiDB-lite"/>
    </source>
</evidence>
<accession>Q2JLU2</accession>
<feature type="chain" id="PRO_1000024689" description="ATP-dependent Clp protease ATP-binding subunit ClpX">
    <location>
        <begin position="1"/>
        <end position="448"/>
    </location>
</feature>
<feature type="domain" description="ClpX-type ZB" evidence="2">
    <location>
        <begin position="1"/>
        <end position="51"/>
    </location>
</feature>
<feature type="region of interest" description="Disordered" evidence="3">
    <location>
        <begin position="50"/>
        <end position="76"/>
    </location>
</feature>
<feature type="binding site" evidence="2">
    <location>
        <position position="10"/>
    </location>
    <ligand>
        <name>Zn(2+)</name>
        <dbReference type="ChEBI" id="CHEBI:29105"/>
    </ligand>
</feature>
<feature type="binding site" evidence="2">
    <location>
        <position position="13"/>
    </location>
    <ligand>
        <name>Zn(2+)</name>
        <dbReference type="ChEBI" id="CHEBI:29105"/>
    </ligand>
</feature>
<feature type="binding site" evidence="2">
    <location>
        <position position="32"/>
    </location>
    <ligand>
        <name>Zn(2+)</name>
        <dbReference type="ChEBI" id="CHEBI:29105"/>
    </ligand>
</feature>
<feature type="binding site" evidence="2">
    <location>
        <position position="35"/>
    </location>
    <ligand>
        <name>Zn(2+)</name>
        <dbReference type="ChEBI" id="CHEBI:29105"/>
    </ligand>
</feature>
<feature type="binding site" evidence="1">
    <location>
        <begin position="143"/>
        <end position="150"/>
    </location>
    <ligand>
        <name>ATP</name>
        <dbReference type="ChEBI" id="CHEBI:30616"/>
    </ligand>
</feature>
<protein>
    <recommendedName>
        <fullName evidence="1">ATP-dependent Clp protease ATP-binding subunit ClpX</fullName>
    </recommendedName>
</protein>
<keyword id="KW-0067">ATP-binding</keyword>
<keyword id="KW-0143">Chaperone</keyword>
<keyword id="KW-0479">Metal-binding</keyword>
<keyword id="KW-0547">Nucleotide-binding</keyword>
<keyword id="KW-1185">Reference proteome</keyword>
<keyword id="KW-0862">Zinc</keyword>
<comment type="function">
    <text evidence="1">ATP-dependent specificity component of the Clp protease. It directs the protease to specific substrates. Can perform chaperone functions in the absence of ClpP.</text>
</comment>
<comment type="subunit">
    <text evidence="1">Component of the ClpX-ClpP complex. Forms a hexameric ring that, in the presence of ATP, binds to fourteen ClpP subunits assembled into a disk-like structure with a central cavity, resembling the structure of eukaryotic proteasomes.</text>
</comment>
<comment type="similarity">
    <text evidence="1">Belongs to the ClpX chaperone family.</text>
</comment>
<dbReference type="EMBL" id="CP000240">
    <property type="protein sequence ID" value="ABD02309.1"/>
    <property type="molecule type" value="Genomic_DNA"/>
</dbReference>
<dbReference type="RefSeq" id="WP_011432959.1">
    <property type="nucleotide sequence ID" value="NC_007776.1"/>
</dbReference>
<dbReference type="SMR" id="Q2JLU2"/>
<dbReference type="STRING" id="321332.CYB_1336"/>
<dbReference type="KEGG" id="cyb:CYB_1336"/>
<dbReference type="eggNOG" id="COG1219">
    <property type="taxonomic scope" value="Bacteria"/>
</dbReference>
<dbReference type="HOGENOM" id="CLU_014218_8_2_3"/>
<dbReference type="OrthoDB" id="9804062at2"/>
<dbReference type="Proteomes" id="UP000001938">
    <property type="component" value="Chromosome"/>
</dbReference>
<dbReference type="GO" id="GO:0009376">
    <property type="term" value="C:HslUV protease complex"/>
    <property type="evidence" value="ECO:0007669"/>
    <property type="project" value="TreeGrafter"/>
</dbReference>
<dbReference type="GO" id="GO:0005524">
    <property type="term" value="F:ATP binding"/>
    <property type="evidence" value="ECO:0007669"/>
    <property type="project" value="UniProtKB-UniRule"/>
</dbReference>
<dbReference type="GO" id="GO:0016887">
    <property type="term" value="F:ATP hydrolysis activity"/>
    <property type="evidence" value="ECO:0007669"/>
    <property type="project" value="InterPro"/>
</dbReference>
<dbReference type="GO" id="GO:0140662">
    <property type="term" value="F:ATP-dependent protein folding chaperone"/>
    <property type="evidence" value="ECO:0007669"/>
    <property type="project" value="InterPro"/>
</dbReference>
<dbReference type="GO" id="GO:0046983">
    <property type="term" value="F:protein dimerization activity"/>
    <property type="evidence" value="ECO:0007669"/>
    <property type="project" value="InterPro"/>
</dbReference>
<dbReference type="GO" id="GO:0051082">
    <property type="term" value="F:unfolded protein binding"/>
    <property type="evidence" value="ECO:0007669"/>
    <property type="project" value="UniProtKB-UniRule"/>
</dbReference>
<dbReference type="GO" id="GO:0008270">
    <property type="term" value="F:zinc ion binding"/>
    <property type="evidence" value="ECO:0007669"/>
    <property type="project" value="InterPro"/>
</dbReference>
<dbReference type="GO" id="GO:0051301">
    <property type="term" value="P:cell division"/>
    <property type="evidence" value="ECO:0007669"/>
    <property type="project" value="TreeGrafter"/>
</dbReference>
<dbReference type="GO" id="GO:0051603">
    <property type="term" value="P:proteolysis involved in protein catabolic process"/>
    <property type="evidence" value="ECO:0007669"/>
    <property type="project" value="TreeGrafter"/>
</dbReference>
<dbReference type="CDD" id="cd19497">
    <property type="entry name" value="RecA-like_ClpX"/>
    <property type="match status" value="1"/>
</dbReference>
<dbReference type="FunFam" id="1.10.8.60:FF:000002">
    <property type="entry name" value="ATP-dependent Clp protease ATP-binding subunit ClpX"/>
    <property type="match status" value="1"/>
</dbReference>
<dbReference type="FunFam" id="3.40.50.300:FF:000005">
    <property type="entry name" value="ATP-dependent Clp protease ATP-binding subunit ClpX"/>
    <property type="match status" value="1"/>
</dbReference>
<dbReference type="Gene3D" id="1.10.8.60">
    <property type="match status" value="1"/>
</dbReference>
<dbReference type="Gene3D" id="6.20.220.10">
    <property type="entry name" value="ClpX chaperone, C4-type zinc finger domain"/>
    <property type="match status" value="1"/>
</dbReference>
<dbReference type="Gene3D" id="3.40.50.300">
    <property type="entry name" value="P-loop containing nucleotide triphosphate hydrolases"/>
    <property type="match status" value="1"/>
</dbReference>
<dbReference type="HAMAP" id="MF_00175">
    <property type="entry name" value="ClpX"/>
    <property type="match status" value="1"/>
</dbReference>
<dbReference type="InterPro" id="IPR003593">
    <property type="entry name" value="AAA+_ATPase"/>
</dbReference>
<dbReference type="InterPro" id="IPR050052">
    <property type="entry name" value="ATP-dep_Clp_protease_ClpX"/>
</dbReference>
<dbReference type="InterPro" id="IPR003959">
    <property type="entry name" value="ATPase_AAA_core"/>
</dbReference>
<dbReference type="InterPro" id="IPR019489">
    <property type="entry name" value="Clp_ATPase_C"/>
</dbReference>
<dbReference type="InterPro" id="IPR004487">
    <property type="entry name" value="Clp_protease_ATP-bd_su_ClpX"/>
</dbReference>
<dbReference type="InterPro" id="IPR046425">
    <property type="entry name" value="ClpX_bact"/>
</dbReference>
<dbReference type="InterPro" id="IPR027417">
    <property type="entry name" value="P-loop_NTPase"/>
</dbReference>
<dbReference type="InterPro" id="IPR010603">
    <property type="entry name" value="Znf_CppX_C4"/>
</dbReference>
<dbReference type="InterPro" id="IPR038366">
    <property type="entry name" value="Znf_CppX_C4_sf"/>
</dbReference>
<dbReference type="NCBIfam" id="TIGR00382">
    <property type="entry name" value="clpX"/>
    <property type="match status" value="1"/>
</dbReference>
<dbReference type="NCBIfam" id="NF003745">
    <property type="entry name" value="PRK05342.1"/>
    <property type="match status" value="1"/>
</dbReference>
<dbReference type="PANTHER" id="PTHR48102:SF7">
    <property type="entry name" value="ATP-DEPENDENT CLP PROTEASE ATP-BINDING SUBUNIT CLPX-LIKE, MITOCHONDRIAL"/>
    <property type="match status" value="1"/>
</dbReference>
<dbReference type="PANTHER" id="PTHR48102">
    <property type="entry name" value="ATP-DEPENDENT CLP PROTEASE ATP-BINDING SUBUNIT CLPX-LIKE, MITOCHONDRIAL-RELATED"/>
    <property type="match status" value="1"/>
</dbReference>
<dbReference type="Pfam" id="PF07724">
    <property type="entry name" value="AAA_2"/>
    <property type="match status" value="1"/>
</dbReference>
<dbReference type="Pfam" id="PF10431">
    <property type="entry name" value="ClpB_D2-small"/>
    <property type="match status" value="1"/>
</dbReference>
<dbReference type="Pfam" id="PF06689">
    <property type="entry name" value="zf-C4_ClpX"/>
    <property type="match status" value="1"/>
</dbReference>
<dbReference type="SMART" id="SM00382">
    <property type="entry name" value="AAA"/>
    <property type="match status" value="1"/>
</dbReference>
<dbReference type="SMART" id="SM01086">
    <property type="entry name" value="ClpB_D2-small"/>
    <property type="match status" value="1"/>
</dbReference>
<dbReference type="SMART" id="SM00994">
    <property type="entry name" value="zf-C4_ClpX"/>
    <property type="match status" value="1"/>
</dbReference>
<dbReference type="SUPFAM" id="SSF57716">
    <property type="entry name" value="Glucocorticoid receptor-like (DNA-binding domain)"/>
    <property type="match status" value="1"/>
</dbReference>
<dbReference type="SUPFAM" id="SSF52540">
    <property type="entry name" value="P-loop containing nucleoside triphosphate hydrolases"/>
    <property type="match status" value="1"/>
</dbReference>
<dbReference type="PROSITE" id="PS51902">
    <property type="entry name" value="CLPX_ZB"/>
    <property type="match status" value="1"/>
</dbReference>
<name>CLPX_SYNJB</name>
<organism>
    <name type="scientific">Synechococcus sp. (strain JA-2-3B'a(2-13))</name>
    <name type="common">Cyanobacteria bacterium Yellowstone B-Prime</name>
    <dbReference type="NCBI Taxonomy" id="321332"/>
    <lineage>
        <taxon>Bacteria</taxon>
        <taxon>Bacillati</taxon>
        <taxon>Cyanobacteriota</taxon>
        <taxon>Cyanophyceae</taxon>
        <taxon>Synechococcales</taxon>
        <taxon>Synechococcaceae</taxon>
        <taxon>Synechococcus</taxon>
    </lineage>
</organism>
<sequence>MAKYDSHLKCSFCNKSQDQVRKLIAGPGVYICDECVELCNEILDEELYDGNTPPAAAPAGGRRETPKKPSRSLPSLAQLPKPQEIMRYLDQYVIGQEKAKKVLSVAVYNHYKRLAAKANPGSVGVSELDEVELQKSNILIIGPTGSGKTLLAETLARMLDVPFAVADATTLTEAGYVGEDVENILLRLLQVADMDVEEAQRGIIYIDEIDKIARKSENPSITRDVSGEGVQQALLKMLEGTIANVPPQGGRKHPYQDCIQIDTSNILFICGGAFVGLEKVIEQRIGKKSMGFIKPGEQLSVSREQRMANALKALEPEDLIKYGMIPEFTGRLPVVATLDPLDEKALEAILTQPKNAILKQAQKLLRMDGVELEFEPAAIAAIAKEAYRRKTGARALRAIVEELMLDVMYEAPSRRDLKYIRITAEMVERRSTRELIPHPSTLPKPESA</sequence>